<sequence length="644" mass="71957">MKLITILFLCSRLLLSLTQESQSEEIDCNDKDLFKAVDAALKKYNSQNQSNNQFVLYRITEATKTVGSDTFYSFKYEIKEGDCPVQSGKTWQDCEYKDAAKAATGECTATVGKRSSTKFSVATQTCQITPAEGPVVTAQYDCLGCVHPISTQSPDLEPILRHGIQYFNNNTQHSSLFMLNEVKRAQRQVVAGLNFRITYSIVQTNCSKENFLFLTPDCKSLWNGDTGECTDNAYIDIQLRIASFSQNCDIYPGKDFVQPPTKICVGCPRDIPTNSPELEETLTHTITKLNAENNATFYFKIDNVKKARVQVVAGKKYFIDFVARETTCSKESNEELTESCETKKLGQSLDCNAEVYVVPWEKKIYPTVNCQPLGMISLMKRPPGFSPFRSSRIGEIKEETTVSPPHTSMAPAQDEERDSGKEQGHTRRHDWGHEKQRKHNLGHGHKHERDQGHGHQRGHGLGHGHEQQHGLGHGHKFKLDDDLEHQGGHVLDHGHKHKHGHGHGKHKNKGKKNGKHNGWKTEHLASSSEDSTTPSAQTQEKTEGPTPIPSLAKPGVTVTFSDFQDSDLIATMMPPISPAPIQSDDDWIPDIQIDPNGLSFNPISDFPDTTSPKCPGRPWKSVSEINPTTQMKESYYFDLTDGLS</sequence>
<organism>
    <name type="scientific">Homo sapiens</name>
    <name type="common">Human</name>
    <dbReference type="NCBI Taxonomy" id="9606"/>
    <lineage>
        <taxon>Eukaryota</taxon>
        <taxon>Metazoa</taxon>
        <taxon>Chordata</taxon>
        <taxon>Craniata</taxon>
        <taxon>Vertebrata</taxon>
        <taxon>Euteleostomi</taxon>
        <taxon>Mammalia</taxon>
        <taxon>Eutheria</taxon>
        <taxon>Euarchontoglires</taxon>
        <taxon>Primates</taxon>
        <taxon>Haplorrhini</taxon>
        <taxon>Catarrhini</taxon>
        <taxon>Hominidae</taxon>
        <taxon>Homo</taxon>
    </lineage>
</organism>
<dbReference type="EMBL" id="K02566">
    <property type="protein sequence ID" value="AAA35497.1"/>
    <property type="molecule type" value="mRNA"/>
</dbReference>
<dbReference type="EMBL" id="M11437">
    <property type="protein sequence ID" value="AAB59550.1"/>
    <property type="molecule type" value="Genomic_DNA"/>
</dbReference>
<dbReference type="EMBL" id="M11438">
    <property type="protein sequence ID" value="AAB59550.1"/>
    <property type="status" value="JOINED"/>
    <property type="molecule type" value="Genomic_DNA"/>
</dbReference>
<dbReference type="EMBL" id="M11521">
    <property type="protein sequence ID" value="AAB59550.1"/>
    <property type="status" value="JOINED"/>
    <property type="molecule type" value="Genomic_DNA"/>
</dbReference>
<dbReference type="EMBL" id="M11522">
    <property type="protein sequence ID" value="AAB59550.1"/>
    <property type="status" value="JOINED"/>
    <property type="molecule type" value="Genomic_DNA"/>
</dbReference>
<dbReference type="EMBL" id="M11523">
    <property type="protein sequence ID" value="AAB59550.1"/>
    <property type="status" value="JOINED"/>
    <property type="molecule type" value="Genomic_DNA"/>
</dbReference>
<dbReference type="EMBL" id="M11524">
    <property type="protein sequence ID" value="AAB59550.1"/>
    <property type="status" value="JOINED"/>
    <property type="molecule type" value="Genomic_DNA"/>
</dbReference>
<dbReference type="EMBL" id="M11525">
    <property type="protein sequence ID" value="AAB59550.1"/>
    <property type="status" value="JOINED"/>
    <property type="molecule type" value="Genomic_DNA"/>
</dbReference>
<dbReference type="EMBL" id="M11526">
    <property type="protein sequence ID" value="AAB59550.1"/>
    <property type="status" value="JOINED"/>
    <property type="molecule type" value="Genomic_DNA"/>
</dbReference>
<dbReference type="EMBL" id="M11527">
    <property type="protein sequence ID" value="AAB59550.1"/>
    <property type="status" value="JOINED"/>
    <property type="molecule type" value="Genomic_DNA"/>
</dbReference>
<dbReference type="EMBL" id="M11528">
    <property type="protein sequence ID" value="AAB59550.1"/>
    <property type="status" value="JOINED"/>
    <property type="molecule type" value="Genomic_DNA"/>
</dbReference>
<dbReference type="EMBL" id="M11437">
    <property type="protein sequence ID" value="AAB59551.1"/>
    <property type="molecule type" value="Genomic_DNA"/>
</dbReference>
<dbReference type="EMBL" id="M11438">
    <property type="protein sequence ID" value="AAB59551.1"/>
    <property type="status" value="JOINED"/>
    <property type="molecule type" value="Genomic_DNA"/>
</dbReference>
<dbReference type="EMBL" id="M11521">
    <property type="protein sequence ID" value="AAB59551.1"/>
    <property type="status" value="JOINED"/>
    <property type="molecule type" value="Genomic_DNA"/>
</dbReference>
<dbReference type="EMBL" id="M11522">
    <property type="protein sequence ID" value="AAB59551.1"/>
    <property type="status" value="JOINED"/>
    <property type="molecule type" value="Genomic_DNA"/>
</dbReference>
<dbReference type="EMBL" id="M11523">
    <property type="protein sequence ID" value="AAB59551.1"/>
    <property type="status" value="JOINED"/>
    <property type="molecule type" value="Genomic_DNA"/>
</dbReference>
<dbReference type="EMBL" id="M11524">
    <property type="protein sequence ID" value="AAB59551.1"/>
    <property type="status" value="JOINED"/>
    <property type="molecule type" value="Genomic_DNA"/>
</dbReference>
<dbReference type="EMBL" id="M11525">
    <property type="protein sequence ID" value="AAB59551.1"/>
    <property type="status" value="JOINED"/>
    <property type="molecule type" value="Genomic_DNA"/>
</dbReference>
<dbReference type="EMBL" id="M11526">
    <property type="protein sequence ID" value="AAB59551.1"/>
    <property type="status" value="JOINED"/>
    <property type="molecule type" value="Genomic_DNA"/>
</dbReference>
<dbReference type="EMBL" id="M11527">
    <property type="protein sequence ID" value="AAB59551.1"/>
    <property type="status" value="JOINED"/>
    <property type="molecule type" value="Genomic_DNA"/>
</dbReference>
<dbReference type="EMBL" id="M11528">
    <property type="protein sequence ID" value="AAB59551.1"/>
    <property type="status" value="JOINED"/>
    <property type="molecule type" value="Genomic_DNA"/>
</dbReference>
<dbReference type="EMBL" id="AK315230">
    <property type="protein sequence ID" value="BAG37659.1"/>
    <property type="molecule type" value="mRNA"/>
</dbReference>
<dbReference type="EMBL" id="AK290839">
    <property type="protein sequence ID" value="BAF83528.1"/>
    <property type="molecule type" value="mRNA"/>
</dbReference>
<dbReference type="EMBL" id="AK223589">
    <property type="protein sequence ID" value="BAD97309.1"/>
    <property type="molecule type" value="mRNA"/>
</dbReference>
<dbReference type="EMBL" id="AY248697">
    <property type="protein sequence ID" value="AAO61092.1"/>
    <property type="molecule type" value="Genomic_DNA"/>
</dbReference>
<dbReference type="EMBL" id="AC109780">
    <property type="status" value="NOT_ANNOTATED_CDS"/>
    <property type="molecule type" value="Genomic_DNA"/>
</dbReference>
<dbReference type="EMBL" id="AC112907">
    <property type="status" value="NOT_ANNOTATED_CDS"/>
    <property type="molecule type" value="Genomic_DNA"/>
</dbReference>
<dbReference type="EMBL" id="CH471052">
    <property type="protein sequence ID" value="EAW78179.1"/>
    <property type="molecule type" value="Genomic_DNA"/>
</dbReference>
<dbReference type="EMBL" id="BC060039">
    <property type="protein sequence ID" value="AAH60039.1"/>
    <property type="molecule type" value="mRNA"/>
</dbReference>
<dbReference type="CCDS" id="CCDS3281.1">
    <molecule id="P01042-2"/>
</dbReference>
<dbReference type="CCDS" id="CCDS43183.1">
    <molecule id="P01042-1"/>
</dbReference>
<dbReference type="CCDS" id="CCDS54695.1">
    <molecule id="P01042-3"/>
</dbReference>
<dbReference type="PIR" id="A01279">
    <property type="entry name" value="KGHUH1"/>
</dbReference>
<dbReference type="PIR" id="A01280">
    <property type="entry name" value="KGHUL1"/>
</dbReference>
<dbReference type="PIR" id="S13279">
    <property type="entry name" value="S13279"/>
</dbReference>
<dbReference type="RefSeq" id="NP_000884.1">
    <molecule id="P01042-2"/>
    <property type="nucleotide sequence ID" value="NM_000893.4"/>
</dbReference>
<dbReference type="RefSeq" id="NP_001095886.1">
    <molecule id="P01042-1"/>
    <property type="nucleotide sequence ID" value="NM_001102416.3"/>
</dbReference>
<dbReference type="RefSeq" id="NP_001159923.1">
    <molecule id="P01042-3"/>
    <property type="nucleotide sequence ID" value="NM_001166451.2"/>
</dbReference>
<dbReference type="PDB" id="1NY2">
    <property type="method" value="X-ray"/>
    <property type="resolution" value="2.30 A"/>
    <property type="chains" value="4=381-385"/>
</dbReference>
<dbReference type="PDB" id="2WOK">
    <property type="method" value="X-ray"/>
    <property type="resolution" value="1.70 A"/>
    <property type="chains" value="B=381-389"/>
</dbReference>
<dbReference type="PDB" id="4ASQ">
    <property type="method" value="X-ray"/>
    <property type="resolution" value="1.99 A"/>
    <property type="chains" value="P=381-389"/>
</dbReference>
<dbReference type="PDB" id="4ASR">
    <property type="method" value="X-ray"/>
    <property type="resolution" value="1.90 A"/>
    <property type="chains" value="P=381-389"/>
</dbReference>
<dbReference type="PDB" id="4ECB">
    <property type="method" value="X-ray"/>
    <property type="resolution" value="2.20 A"/>
    <property type="chains" value="A/B=498-507"/>
</dbReference>
<dbReference type="PDB" id="4ECC">
    <property type="method" value="X-ray"/>
    <property type="resolution" value="2.20 A"/>
    <property type="chains" value="A=498-510"/>
</dbReference>
<dbReference type="PDB" id="5I25">
    <property type="method" value="X-ray"/>
    <property type="resolution" value="2.85 A"/>
    <property type="chains" value="B=601-608"/>
</dbReference>
<dbReference type="PDB" id="6F27">
    <property type="method" value="NMR"/>
    <property type="chains" value="A=380-388"/>
</dbReference>
<dbReference type="PDB" id="6F3V">
    <property type="method" value="NMR"/>
    <property type="chains" value="A=381-389"/>
</dbReference>
<dbReference type="PDB" id="6F3W">
    <property type="method" value="NMR"/>
    <property type="chains" value="A=381-389"/>
</dbReference>
<dbReference type="PDB" id="6F3X">
    <property type="method" value="NMR"/>
    <property type="chains" value="A=380-388"/>
</dbReference>
<dbReference type="PDB" id="6F3Y">
    <property type="method" value="NMR"/>
    <property type="chains" value="A=380-388"/>
</dbReference>
<dbReference type="PDB" id="7EIB">
    <property type="method" value="EM"/>
    <property type="resolution" value="3.00 A"/>
    <property type="chains" value="D=380-388"/>
</dbReference>
<dbReference type="PDB" id="7F2O">
    <property type="method" value="EM"/>
    <property type="resolution" value="2.90 A"/>
    <property type="chains" value="D=381-389"/>
</dbReference>
<dbReference type="PDB" id="7F6H">
    <property type="method" value="EM"/>
    <property type="resolution" value="2.90 A"/>
    <property type="chains" value="L=381-389"/>
</dbReference>
<dbReference type="PDB" id="7F6I">
    <property type="method" value="EM"/>
    <property type="resolution" value="2.80 A"/>
    <property type="chains" value="L=380-389"/>
</dbReference>
<dbReference type="PDB" id="7QOT">
    <property type="method" value="X-ray"/>
    <property type="resolution" value="3.24 A"/>
    <property type="chains" value="C/D=583-613"/>
</dbReference>
<dbReference type="PDB" id="7QOX">
    <property type="method" value="X-ray"/>
    <property type="resolution" value="2.32 A"/>
    <property type="chains" value="C/D=582-609"/>
</dbReference>
<dbReference type="PDB" id="8VJX">
    <property type="method" value="X-ray"/>
    <property type="resolution" value="2.89 A"/>
    <property type="chains" value="C=381-389"/>
</dbReference>
<dbReference type="PDBsum" id="1NY2"/>
<dbReference type="PDBsum" id="2WOK"/>
<dbReference type="PDBsum" id="4ASQ"/>
<dbReference type="PDBsum" id="4ASR"/>
<dbReference type="PDBsum" id="4ECB"/>
<dbReference type="PDBsum" id="4ECC"/>
<dbReference type="PDBsum" id="5I25"/>
<dbReference type="PDBsum" id="6F27"/>
<dbReference type="PDBsum" id="6F3V"/>
<dbReference type="PDBsum" id="6F3W"/>
<dbReference type="PDBsum" id="6F3X"/>
<dbReference type="PDBsum" id="6F3Y"/>
<dbReference type="PDBsum" id="7EIB"/>
<dbReference type="PDBsum" id="7F2O"/>
<dbReference type="PDBsum" id="7F6H"/>
<dbReference type="PDBsum" id="7F6I"/>
<dbReference type="PDBsum" id="7QOT"/>
<dbReference type="PDBsum" id="7QOX"/>
<dbReference type="PDBsum" id="8VJX"/>
<dbReference type="BMRB" id="P01042"/>
<dbReference type="EMDB" id="EMD-15972"/>
<dbReference type="EMDB" id="EMD-31480"/>
<dbReference type="EMDB" id="EMD-31481"/>
<dbReference type="SMR" id="P01042"/>
<dbReference type="BioGRID" id="110026">
    <property type="interactions" value="51"/>
</dbReference>
<dbReference type="FunCoup" id="P01042">
    <property type="interactions" value="818"/>
</dbReference>
<dbReference type="IntAct" id="P01042">
    <property type="interactions" value="43"/>
</dbReference>
<dbReference type="MINT" id="P01042"/>
<dbReference type="STRING" id="9606.ENSP00000493985"/>
<dbReference type="BindingDB" id="P01042"/>
<dbReference type="DrugBank" id="DB12120">
    <property type="generic name" value="Avoralstat"/>
</dbReference>
<dbReference type="DrugBank" id="DB09130">
    <property type="generic name" value="Copper"/>
</dbReference>
<dbReference type="DrugBank" id="DB01593">
    <property type="generic name" value="Zinc"/>
</dbReference>
<dbReference type="DrugBank" id="DB14487">
    <property type="generic name" value="Zinc acetate"/>
</dbReference>
<dbReference type="DrugBank" id="DB14533">
    <property type="generic name" value="Zinc chloride"/>
</dbReference>
<dbReference type="DrugBank" id="DB14548">
    <property type="generic name" value="Zinc sulfate, unspecified form"/>
</dbReference>
<dbReference type="MEROPS" id="I25.016"/>
<dbReference type="MEROPS" id="I25.017"/>
<dbReference type="MEROPS" id="I25.950"/>
<dbReference type="CarbonylDB" id="P01042"/>
<dbReference type="GlyConnect" id="810">
    <property type="glycosylation" value="60 N-Linked glycans (5 sites), 1 O-Linked glycan (1 site)"/>
</dbReference>
<dbReference type="GlyCosmos" id="P01042">
    <property type="glycosylation" value="26 sites, 88 glycans"/>
</dbReference>
<dbReference type="GlyGen" id="P01042">
    <property type="glycosylation" value="29 sites, 178 N-linked glycans (5 sites), 10 O-linked glycans (20 sites)"/>
</dbReference>
<dbReference type="iPTMnet" id="P01042"/>
<dbReference type="PhosphoSitePlus" id="P01042"/>
<dbReference type="BioMuta" id="KNG1"/>
<dbReference type="DMDM" id="124056474"/>
<dbReference type="CPTAC" id="CPTAC-687"/>
<dbReference type="CPTAC" id="non-CPTAC-1138"/>
<dbReference type="jPOST" id="P01042"/>
<dbReference type="MassIVE" id="P01042"/>
<dbReference type="PaxDb" id="9606-ENSP00000265023"/>
<dbReference type="PeptideAtlas" id="P01042"/>
<dbReference type="ProteomicsDB" id="51315">
    <molecule id="P01042-1"/>
</dbReference>
<dbReference type="ProteomicsDB" id="51316">
    <molecule id="P01042-2"/>
</dbReference>
<dbReference type="ProteomicsDB" id="9908"/>
<dbReference type="Antibodypedia" id="888">
    <property type="antibodies" value="804 antibodies from 43 providers"/>
</dbReference>
<dbReference type="DNASU" id="3827"/>
<dbReference type="Ensembl" id="ENST00000287611.8">
    <molecule id="P01042-2"/>
    <property type="protein sequence ID" value="ENSP00000287611.2"/>
    <property type="gene ID" value="ENSG00000113889.14"/>
</dbReference>
<dbReference type="Ensembl" id="ENST00000447445.1">
    <molecule id="P01042-3"/>
    <property type="protein sequence ID" value="ENSP00000396025.1"/>
    <property type="gene ID" value="ENSG00000113889.14"/>
</dbReference>
<dbReference type="Ensembl" id="ENST00000644859.2">
    <molecule id="P01042-1"/>
    <property type="protein sequence ID" value="ENSP00000493985.1"/>
    <property type="gene ID" value="ENSG00000113889.14"/>
</dbReference>
<dbReference type="GeneID" id="3827"/>
<dbReference type="KEGG" id="hsa:3827"/>
<dbReference type="MANE-Select" id="ENST00000644859.2">
    <property type="protein sequence ID" value="ENSP00000493985.1"/>
    <property type="RefSeq nucleotide sequence ID" value="NM_001102416.3"/>
    <property type="RefSeq protein sequence ID" value="NP_001095886.1"/>
</dbReference>
<dbReference type="UCSC" id="uc003fqr.4">
    <molecule id="P01042-1"/>
    <property type="organism name" value="human"/>
</dbReference>
<dbReference type="AGR" id="HGNC:6383"/>
<dbReference type="CTD" id="3827"/>
<dbReference type="DisGeNET" id="3827"/>
<dbReference type="GeneCards" id="KNG1"/>
<dbReference type="HGNC" id="HGNC:6383">
    <property type="gene designation" value="KNG1"/>
</dbReference>
<dbReference type="HPA" id="ENSG00000113889">
    <property type="expression patterns" value="Tissue enriched (liver)"/>
</dbReference>
<dbReference type="MalaCards" id="KNG1"/>
<dbReference type="MIM" id="228960">
    <property type="type" value="phenotype"/>
</dbReference>
<dbReference type="MIM" id="612358">
    <property type="type" value="gene"/>
</dbReference>
<dbReference type="MIM" id="619363">
    <property type="type" value="phenotype"/>
</dbReference>
<dbReference type="neXtProt" id="NX_P01042"/>
<dbReference type="OpenTargets" id="ENSG00000113889"/>
<dbReference type="Orphanet" id="483">
    <property type="disease" value="Congenital high-molecular-weight kininogen deficiency"/>
</dbReference>
<dbReference type="Orphanet" id="599418">
    <property type="disease" value="Hereditary angioedema with normal C1Inh not related to F12 or PLG variant"/>
</dbReference>
<dbReference type="PharmGKB" id="PA225"/>
<dbReference type="VEuPathDB" id="HostDB:ENSG00000113889"/>
<dbReference type="eggNOG" id="ENOG502RYAC">
    <property type="taxonomic scope" value="Eukaryota"/>
</dbReference>
<dbReference type="GeneTree" id="ENSGT00950000182930"/>
<dbReference type="HOGENOM" id="CLU_029531_0_0_1"/>
<dbReference type="InParanoid" id="P01042"/>
<dbReference type="OMA" id="DQGHGHQ"/>
<dbReference type="OrthoDB" id="9937817at2759"/>
<dbReference type="PAN-GO" id="P01042">
    <property type="GO annotations" value="5 GO annotations based on evolutionary models"/>
</dbReference>
<dbReference type="PhylomeDB" id="P01042"/>
<dbReference type="TreeFam" id="TF351852"/>
<dbReference type="PathwayCommons" id="P01042"/>
<dbReference type="Reactome" id="R-HSA-114608">
    <property type="pathway name" value="Platelet degranulation"/>
</dbReference>
<dbReference type="Reactome" id="R-HSA-140837">
    <property type="pathway name" value="Intrinsic Pathway of Fibrin Clot Formation"/>
</dbReference>
<dbReference type="Reactome" id="R-HSA-375276">
    <property type="pathway name" value="Peptide ligand-binding receptors"/>
</dbReference>
<dbReference type="Reactome" id="R-HSA-381426">
    <property type="pathway name" value="Regulation of Insulin-like Growth Factor (IGF) transport and uptake by Insulin-like Growth Factor Binding Proteins (IGFBPs)"/>
</dbReference>
<dbReference type="Reactome" id="R-HSA-416476">
    <property type="pathway name" value="G alpha (q) signalling events"/>
</dbReference>
<dbReference type="Reactome" id="R-HSA-418594">
    <property type="pathway name" value="G alpha (i) signalling events"/>
</dbReference>
<dbReference type="Reactome" id="R-HSA-8957275">
    <property type="pathway name" value="Post-translational protein phosphorylation"/>
</dbReference>
<dbReference type="SignaLink" id="P01042"/>
<dbReference type="SIGNOR" id="P01042"/>
<dbReference type="BioGRID-ORCS" id="3827">
    <property type="hits" value="11 hits in 1150 CRISPR screens"/>
</dbReference>
<dbReference type="ChiTaRS" id="KNG1">
    <property type="organism name" value="human"/>
</dbReference>
<dbReference type="EvolutionaryTrace" id="P01042"/>
<dbReference type="GeneWiki" id="Kininogen_1"/>
<dbReference type="GenomeRNAi" id="3827"/>
<dbReference type="Pharos" id="P01042">
    <property type="development level" value="Tbio"/>
</dbReference>
<dbReference type="PRO" id="PR:P01042"/>
<dbReference type="Proteomes" id="UP000005640">
    <property type="component" value="Chromosome 3"/>
</dbReference>
<dbReference type="RNAct" id="P01042">
    <property type="molecule type" value="protein"/>
</dbReference>
<dbReference type="Bgee" id="ENSG00000113889">
    <property type="expression patterns" value="Expressed in renal medulla and 95 other cell types or tissues"/>
</dbReference>
<dbReference type="GO" id="GO:0072562">
    <property type="term" value="C:blood microparticle"/>
    <property type="evidence" value="ECO:0007005"/>
    <property type="project" value="UniProtKB"/>
</dbReference>
<dbReference type="GO" id="GO:0062023">
    <property type="term" value="C:collagen-containing extracellular matrix"/>
    <property type="evidence" value="ECO:0007005"/>
    <property type="project" value="BHF-UCL"/>
</dbReference>
<dbReference type="GO" id="GO:0005788">
    <property type="term" value="C:endoplasmic reticulum lumen"/>
    <property type="evidence" value="ECO:0000304"/>
    <property type="project" value="Reactome"/>
</dbReference>
<dbReference type="GO" id="GO:0070062">
    <property type="term" value="C:extracellular exosome"/>
    <property type="evidence" value="ECO:0007005"/>
    <property type="project" value="UniProtKB"/>
</dbReference>
<dbReference type="GO" id="GO:0005576">
    <property type="term" value="C:extracellular region"/>
    <property type="evidence" value="ECO:0007005"/>
    <property type="project" value="BHF-UCL"/>
</dbReference>
<dbReference type="GO" id="GO:0005615">
    <property type="term" value="C:extracellular space"/>
    <property type="evidence" value="ECO:0007005"/>
    <property type="project" value="UniProtKB"/>
</dbReference>
<dbReference type="GO" id="GO:0005886">
    <property type="term" value="C:plasma membrane"/>
    <property type="evidence" value="ECO:0000304"/>
    <property type="project" value="Reactome"/>
</dbReference>
<dbReference type="GO" id="GO:0031093">
    <property type="term" value="C:platelet alpha granule lumen"/>
    <property type="evidence" value="ECO:0000304"/>
    <property type="project" value="Reactome"/>
</dbReference>
<dbReference type="GO" id="GO:0004869">
    <property type="term" value="F:cysteine-type endopeptidase inhibitor activity"/>
    <property type="evidence" value="ECO:0000314"/>
    <property type="project" value="UniProtKB"/>
</dbReference>
<dbReference type="GO" id="GO:0008201">
    <property type="term" value="F:heparin binding"/>
    <property type="evidence" value="ECO:0000303"/>
    <property type="project" value="UniProtKB"/>
</dbReference>
<dbReference type="GO" id="GO:0005179">
    <property type="term" value="F:hormone activity"/>
    <property type="evidence" value="ECO:0000314"/>
    <property type="project" value="UniProt"/>
</dbReference>
<dbReference type="GO" id="GO:0005102">
    <property type="term" value="F:signaling receptor binding"/>
    <property type="evidence" value="ECO:0000353"/>
    <property type="project" value="UniProtKB"/>
</dbReference>
<dbReference type="GO" id="GO:0008270">
    <property type="term" value="F:zinc ion binding"/>
    <property type="evidence" value="ECO:0000303"/>
    <property type="project" value="UniProtKB"/>
</dbReference>
<dbReference type="GO" id="GO:0007596">
    <property type="term" value="P:blood coagulation"/>
    <property type="evidence" value="ECO:0007669"/>
    <property type="project" value="UniProtKB-KW"/>
</dbReference>
<dbReference type="GO" id="GO:0006954">
    <property type="term" value="P:inflammatory response"/>
    <property type="evidence" value="ECO:0007669"/>
    <property type="project" value="UniProtKB-KW"/>
</dbReference>
<dbReference type="GO" id="GO:0030195">
    <property type="term" value="P:negative regulation of blood coagulation"/>
    <property type="evidence" value="ECO:0000314"/>
    <property type="project" value="UniProtKB"/>
</dbReference>
<dbReference type="GO" id="GO:0007162">
    <property type="term" value="P:negative regulation of cell adhesion"/>
    <property type="evidence" value="ECO:0000314"/>
    <property type="project" value="UniProtKB"/>
</dbReference>
<dbReference type="GO" id="GO:0045861">
    <property type="term" value="P:negative regulation of proteolysis"/>
    <property type="evidence" value="ECO:0000314"/>
    <property type="project" value="UniProtKB"/>
</dbReference>
<dbReference type="GO" id="GO:0043065">
    <property type="term" value="P:positive regulation of apoptotic process"/>
    <property type="evidence" value="ECO:0000303"/>
    <property type="project" value="UniProtKB"/>
</dbReference>
<dbReference type="GO" id="GO:0007204">
    <property type="term" value="P:positive regulation of cytosolic calcium ion concentration"/>
    <property type="evidence" value="ECO:0000314"/>
    <property type="project" value="UniProtKB"/>
</dbReference>
<dbReference type="GO" id="GO:0042311">
    <property type="term" value="P:vasodilation"/>
    <property type="evidence" value="ECO:0000314"/>
    <property type="project" value="UniProt"/>
</dbReference>
<dbReference type="CDD" id="cd00042">
    <property type="entry name" value="CY"/>
    <property type="match status" value="3"/>
</dbReference>
<dbReference type="DisProt" id="DP01861"/>
<dbReference type="FunFam" id="3.10.450.10:FF:000002">
    <property type="entry name" value="Kininogen 1"/>
    <property type="match status" value="2"/>
</dbReference>
<dbReference type="FunFam" id="3.10.450.10:FF:000008">
    <property type="entry name" value="Kininogen 1"/>
    <property type="match status" value="1"/>
</dbReference>
<dbReference type="Gene3D" id="3.10.450.10">
    <property type="match status" value="3"/>
</dbReference>
<dbReference type="InterPro" id="IPR000010">
    <property type="entry name" value="Cystatin_dom"/>
</dbReference>
<dbReference type="InterPro" id="IPR046350">
    <property type="entry name" value="Cystatin_sf"/>
</dbReference>
<dbReference type="InterPro" id="IPR002395">
    <property type="entry name" value="Kininogen"/>
</dbReference>
<dbReference type="InterPro" id="IPR027358">
    <property type="entry name" value="Kininogen-type_cystatin_dom"/>
</dbReference>
<dbReference type="InterPro" id="IPR050735">
    <property type="entry name" value="Kininogen_Fetuin_HRG"/>
</dbReference>
<dbReference type="InterPro" id="IPR018073">
    <property type="entry name" value="Prot_inh_cystat_CS"/>
</dbReference>
<dbReference type="PANTHER" id="PTHR13814">
    <property type="entry name" value="FETUIN"/>
    <property type="match status" value="1"/>
</dbReference>
<dbReference type="PANTHER" id="PTHR13814:SF12">
    <property type="entry name" value="KININOGEN-1"/>
    <property type="match status" value="1"/>
</dbReference>
<dbReference type="Pfam" id="PF00031">
    <property type="entry name" value="Cystatin"/>
    <property type="match status" value="3"/>
</dbReference>
<dbReference type="PRINTS" id="PR00334">
    <property type="entry name" value="KININOGEN"/>
</dbReference>
<dbReference type="SMART" id="SM00043">
    <property type="entry name" value="CY"/>
    <property type="match status" value="3"/>
</dbReference>
<dbReference type="SUPFAM" id="SSF54403">
    <property type="entry name" value="Cystatin/monellin"/>
    <property type="match status" value="3"/>
</dbReference>
<dbReference type="PROSITE" id="PS00287">
    <property type="entry name" value="CYSTATIN"/>
    <property type="match status" value="2"/>
</dbReference>
<dbReference type="PROSITE" id="PS51647">
    <property type="entry name" value="CYSTATIN_KININOGEN"/>
    <property type="match status" value="3"/>
</dbReference>
<gene>
    <name type="primary">KNG1</name>
    <name type="synonym">BDK</name>
    <name type="synonym">KNG</name>
</gene>
<comment type="function">
    <text>Kininogens are inhibitors of thiol proteases. HMW-kininogen plays an important role in blood coagulation by helping to position optimally prekallikrein and factor XI next to factor XII; HMW-kininogen inhibits the thrombin- and plasmin-induced aggregation of thrombocytes. LMW-kininogen inhibits the aggregation of thrombocytes. LMW-kininogen is in contrast to HMW-kininogen not involved in blood clotting.</text>
</comment>
<comment type="function">
    <molecule>Bradykinin</molecule>
    <text evidence="39 40">The active peptide bradykinin is a potent vasodilatator that is released from HMW-kininogen shows a variety of physiological effects: (A) influence in smooth muscle contraction, (B) induction of hypotension, (C) natriuresis and diuresis, (D) decrease in blood glucose level, (E) it is a mediator of inflammation and causes (E1) increase in vascular permeability, (E2) stimulation of nociceptors (4E3) release of other mediators of inflammation (e.g. prostaglandins), (F) it has a cardioprotective effect (directly via bradykinin action, indirectly via endothelium-derived relaxing factor action).</text>
</comment>
<comment type="subunit">
    <text evidence="7 8 10">Interacts (high molecular weight kininogen) (via amino acids 402-532) with triafestin-1 and triafestin-2, anticoagulant proteins from Triatoma infestans (PubMed:17645545). Interacts (high molecular weight kininogen) (via amino acids 402-532) with short form salivary protein D7R1, an anticoagulant protein from Anopheles stephensi (PubMed:17645545). Interacts (high molecular weight kininogen) (via amino acids 421-466 and 459-513) with haemaphysalin, an anticoagulant protein from Haemaphysalis longicornis (PubMed:15711755, PubMed:16169873).</text>
</comment>
<comment type="interaction">
    <interactant intactId="EBI-6378713">
        <id>P01042</id>
    </interactant>
    <interactant intactId="EBI-347528">
        <id>Q07021</id>
        <label>C1QBP</label>
    </interactant>
    <organismsDiffer>false</organismsDiffer>
    <experiments>4</experiments>
</comment>
<comment type="interaction">
    <interactant intactId="EBI-6378713">
        <id>P01042</id>
    </interactant>
    <interactant intactId="EBI-115736">
        <id>Q10714</id>
        <label>Ance</label>
    </interactant>
    <organismsDiffer>true</organismsDiffer>
    <experiments>2</experiments>
</comment>
<comment type="interaction">
    <interactant intactId="EBI-6623250">
        <id>PRO_0000006687</id>
    </interactant>
    <interactant intactId="EBI-6623218">
        <id>P46663</id>
        <label>BDKRB1</label>
    </interactant>
    <organismsDiffer>false</organismsDiffer>
    <experiments>2</experiments>
</comment>
<comment type="interaction">
    <interactant intactId="EBI-6623273">
        <id>PRO_0000006688</id>
    </interactant>
    <interactant intactId="EBI-7730807">
        <id>Q9BYF1</id>
        <label>ACE2</label>
    </interactant>
    <organismsDiffer>false</organismsDiffer>
    <experiments>5</experiments>
</comment>
<comment type="interaction">
    <interactant intactId="EBI-6623273">
        <id>PRO_0000006688</id>
    </interactant>
    <interactant intactId="EBI-6623386">
        <id>P30411</id>
        <label>BDKRB2</label>
    </interactant>
    <organismsDiffer>false</organismsDiffer>
    <experiments>2</experiments>
</comment>
<comment type="subcellular location">
    <subcellularLocation>
        <location>Secreted</location>
        <location>Extracellular space</location>
    </subcellularLocation>
</comment>
<comment type="alternative products">
    <event type="alternative splicing"/>
    <isoform>
        <id>P01042-1</id>
        <name>HMW</name>
        <sequence type="displayed"/>
    </isoform>
    <isoform>
        <id>P01042-2</id>
        <name>LMW</name>
        <sequence type="described" ref="VSP_001261 VSP_001262"/>
    </isoform>
    <isoform>
        <id>P01042-3</id>
        <name>3</name>
        <sequence type="described" ref="VSP_047307 VSP_047308"/>
    </isoform>
</comment>
<comment type="tissue specificity">
    <text evidence="14">Secreted in plasma. T-kinin is detected in malignant ovarian, colon and breast carcinomas, but not in benign tumors.</text>
</comment>
<comment type="PTM">
    <molecule>Bradykinin</molecule>
    <text evidence="24 26">Bradykinin is inactivated by ACE, which removes the dipeptide Arg-Phe from its C-terminus.</text>
</comment>
<comment type="PTM">
    <text evidence="38">Bradykinin is released from kininogen by plasma kallikrein.</text>
</comment>
<comment type="PTM">
    <text evidence="18 20">Hydroxylation of Pro-383 occurs prior to the release of bradykinin.</text>
</comment>
<comment type="PTM">
    <text evidence="15">Phosphorylated by FAM20C in the extracellular medium.</text>
</comment>
<comment type="PTM">
    <text evidence="4 5 9 11 12 13 21">N- and O-glycosylated. O-glycosylated with core 1 or possibly core 8 glycans.</text>
</comment>
<comment type="PTM">
    <text evidence="27">(Microbial infection) Bradykinin is generated upon proteolytic cleavage by S.pyogenes SpeB to produce hypotension during septic shock.</text>
</comment>
<comment type="polymorphism">
    <text evidence="22">The T-kinin peptide is missing residues 378 to 380, probably as a result of a naturally occurring variant. The complete sequence of the T-kinin peptide is therefore ISRPPGFSPFR. This peptide is associated with malignant tumors but not with benign ones.</text>
</comment>
<comment type="disease">
    <disease id="DI-01744">
        <name>High molecular weight kininogen deficiency</name>
        <acronym>HMWK deficiency</acronym>
        <description>Autosomal recessive coagulation defect. Patients with HWMK deficiency do not have a hemorrhagic tendency, but they exhibit abnormal surface-mediated activation of fibrinolysis.</description>
        <dbReference type="MIM" id="228960"/>
    </disease>
    <text>The disease is caused by variants affecting the gene represented in this entry.</text>
</comment>
<comment type="disease" evidence="17 19">
    <disease id="DI-06126">
        <name>Angioedema, hereditary, 6</name>
        <acronym>HAE6</acronym>
        <description>A form of angioedema, a disorder characterized by episodic local swelling involving subcutaneous or submucous tissue of the upper respiratory and gastrointestinal tracts, face, extremities, and genitalia. HAE6 is an autosomal dominant form with onset in adulthood.</description>
        <dbReference type="MIM" id="619363"/>
    </disease>
    <text>The disease is caused by variants affecting the gene represented in this entry.</text>
</comment>
<comment type="online information" name="Wikipedia">
    <link uri="https://en.wikipedia.org/wiki/High-molecular_weight_kininogen"/>
    <text>High molecular weight kininogen entry</text>
</comment>
<feature type="signal peptide" evidence="16 21">
    <location>
        <begin position="1"/>
        <end position="18"/>
    </location>
</feature>
<feature type="chain" id="PRO_0000006685" description="Kininogen-1">
    <location>
        <begin position="19"/>
        <end position="644"/>
    </location>
</feature>
<feature type="chain" id="PRO_0000006686" description="Kininogen-1 heavy chain">
    <location>
        <begin position="19"/>
        <end position="380"/>
    </location>
</feature>
<feature type="peptide" id="PRO_0000372485" description="T-kinin">
    <location>
        <begin position="376"/>
        <end position="389"/>
    </location>
</feature>
<feature type="peptide" id="PRO_0000006687" description="Lysyl-bradykinin">
    <location>
        <begin position="380"/>
        <end position="389"/>
    </location>
</feature>
<feature type="peptide" id="PRO_0000006688" description="Bradykinin" evidence="18 25">
    <location>
        <begin position="381"/>
        <end position="389"/>
    </location>
</feature>
<feature type="chain" id="PRO_0000006689" description="Kininogen-1 light chain">
    <location>
        <begin position="390"/>
        <end position="644"/>
    </location>
</feature>
<feature type="peptide" id="PRO_0000006690" description="Low molecular weight growth-promoting factor">
    <location>
        <begin position="431"/>
        <end position="434"/>
    </location>
</feature>
<feature type="domain" description="Cystatin kininogen-type 1" evidence="2">
    <location>
        <begin position="28"/>
        <end position="132"/>
    </location>
</feature>
<feature type="domain" description="Cystatin kininogen-type 2" evidence="2">
    <location>
        <begin position="151"/>
        <end position="254"/>
    </location>
</feature>
<feature type="domain" description="Cystatin kininogen-type 3" evidence="2">
    <location>
        <begin position="273"/>
        <end position="376"/>
    </location>
</feature>
<feature type="repeat">
    <location>
        <begin position="420"/>
        <end position="449"/>
    </location>
</feature>
<feature type="repeat">
    <location>
        <begin position="450"/>
        <end position="479"/>
    </location>
</feature>
<feature type="repeat">
    <location>
        <begin position="480"/>
        <end position="510"/>
    </location>
</feature>
<feature type="region of interest" description="O-glycosylated at one site only">
    <location>
        <begin position="120"/>
        <end position="153"/>
    </location>
</feature>
<feature type="region of interest" description="Disordered" evidence="3">
    <location>
        <begin position="387"/>
        <end position="555"/>
    </location>
</feature>
<feature type="compositionally biased region" description="Basic and acidic residues" evidence="3">
    <location>
        <begin position="418"/>
        <end position="434"/>
    </location>
</feature>
<feature type="compositionally biased region" description="Basic residues" evidence="3">
    <location>
        <begin position="435"/>
        <end position="446"/>
    </location>
</feature>
<feature type="compositionally biased region" description="Basic and acidic residues" evidence="3">
    <location>
        <begin position="477"/>
        <end position="493"/>
    </location>
</feature>
<feature type="compositionally biased region" description="Basic residues" evidence="3">
    <location>
        <begin position="494"/>
        <end position="518"/>
    </location>
</feature>
<feature type="compositionally biased region" description="Polar residues" evidence="3">
    <location>
        <begin position="524"/>
        <end position="539"/>
    </location>
</feature>
<feature type="site" description="Not glycosylated" evidence="21">
    <location>
        <position position="48"/>
    </location>
</feature>
<feature type="site" description="Cleavage; by kallikrein" evidence="34">
    <location>
        <begin position="379"/>
        <end position="380"/>
    </location>
</feature>
<feature type="site" description="Cleavage; by ACE" evidence="24 26">
    <location>
        <begin position="387"/>
        <end position="388"/>
    </location>
</feature>
<feature type="site" description="Cleavage; by kallikrein" evidence="34">
    <location>
        <begin position="389"/>
        <end position="390"/>
    </location>
</feature>
<feature type="modified residue" description="Pyrrolidone carboxylic acid; in mature form" evidence="1">
    <location>
        <position position="19"/>
    </location>
</feature>
<feature type="modified residue" description="Phosphoserine; by FAM20C" evidence="15 41 42">
    <location>
        <position position="332"/>
    </location>
</feature>
<feature type="modified residue" description="4-hydroxyproline; partial" evidence="18 20">
    <location>
        <position position="383"/>
    </location>
</feature>
<feature type="glycosylation site" description="N-linked (GlcNAc...) (complex) asparagine" evidence="9 11">
    <location>
        <position position="48"/>
    </location>
</feature>
<feature type="glycosylation site" description="N-linked (GlcNAc...) asparagine" evidence="5 9 12 21">
    <location>
        <position position="169"/>
    </location>
</feature>
<feature type="glycosylation site" description="N-linked (GlcNAc...) (complex) asparagine" evidence="9 11 12 21">
    <location>
        <position position="205"/>
    </location>
</feature>
<feature type="glycosylation site" description="N-linked (GlcNAc...) (complex) asparagine" evidence="4 5 9 11 12 13">
    <location>
        <position position="294"/>
    </location>
</feature>
<feature type="glycosylation site" description="O-linked (GalNAc...) threonine">
    <location>
        <position position="401"/>
    </location>
</feature>
<feature type="glycosylation site" description="O-linked (GalNAc...) threonine" evidence="23">
    <location>
        <position position="533"/>
    </location>
</feature>
<feature type="glycosylation site" description="O-linked (GalNAc...) threonine">
    <location>
        <position position="542"/>
    </location>
</feature>
<feature type="glycosylation site" description="O-linked (GalNAc...) threonine" evidence="23">
    <location>
        <position position="546"/>
    </location>
</feature>
<feature type="glycosylation site" description="O-linked (GalNAc...) threonine">
    <location>
        <position position="557"/>
    </location>
</feature>
<feature type="glycosylation site" description="O-linked (GalNAc...) threonine">
    <location>
        <position position="571"/>
    </location>
</feature>
<feature type="glycosylation site" description="O-linked (GalNAc...) serine">
    <location>
        <position position="577"/>
    </location>
</feature>
<feature type="glycosylation site" description="O-linked (GalNAc...) threonine">
    <location>
        <position position="628"/>
    </location>
</feature>
<feature type="disulfide bond" description="Interchain (between heavy and light chains)" evidence="2 28">
    <location>
        <begin position="28"/>
        <end position="614"/>
    </location>
</feature>
<feature type="disulfide bond" evidence="2 28">
    <location>
        <begin position="83"/>
        <end position="94"/>
    </location>
</feature>
<feature type="disulfide bond" evidence="2 28">
    <location>
        <begin position="107"/>
        <end position="126"/>
    </location>
</feature>
<feature type="disulfide bond" evidence="2 28">
    <location>
        <begin position="142"/>
        <end position="145"/>
    </location>
</feature>
<feature type="disulfide bond" evidence="2 28">
    <location>
        <begin position="206"/>
        <end position="218"/>
    </location>
</feature>
<feature type="disulfide bond" evidence="2 28">
    <location>
        <begin position="229"/>
        <end position="248"/>
    </location>
</feature>
<feature type="disulfide bond" evidence="2 28">
    <location>
        <begin position="264"/>
        <end position="267"/>
    </location>
</feature>
<feature type="disulfide bond" evidence="2 28">
    <location>
        <begin position="328"/>
        <end position="340"/>
    </location>
</feature>
<feature type="disulfide bond" evidence="2 28">
    <location>
        <begin position="351"/>
        <end position="370"/>
    </location>
</feature>
<feature type="splice variant" id="VSP_047307" description="In isoform 3." evidence="37">
    <location>
        <begin position="189"/>
        <end position="224"/>
    </location>
</feature>
<feature type="splice variant" id="VSP_047308" description="In isoform 3." evidence="37">
    <original>VSPPHTSMAPAQDEERDSGKEQGHTRRHDWGHEKQRKHNLGHGHKHERDQGHGHQRGHGLGHGHEQQHGLGHGHKFKLDDDLEHQGGHVLDHGHKHKHGHGHGKHKNKGKKNGKHNGWKTEHLASSSEDSTTPSAQTQEKTEGPTPIPSLAKPGVTVTFSDFQDSDLIATMMPPISPAPIQSDDDWIPDIQIDPNGLSFNPISDFPDTTSPKCPGRPWKSVSEINPTTQMKESYYFDLTDGL</original>
    <variation>SHLRSCEYKGRPPKAGAEPASEREV</variation>
    <location>
        <begin position="402"/>
        <end position="643"/>
    </location>
</feature>
<feature type="splice variant" id="VSP_001261" description="In isoform LMW." evidence="32 33 35 36">
    <original>VSPPHTSMAPAQDEERDSGKEQGHTR</original>
    <variation>SHLRSCEYKGRPPKAGAEPASEREVS</variation>
    <location>
        <begin position="402"/>
        <end position="427"/>
    </location>
</feature>
<feature type="splice variant" id="VSP_001262" description="In isoform LMW." evidence="32 33 35 36">
    <location>
        <begin position="428"/>
        <end position="644"/>
    </location>
</feature>
<feature type="sequence variant" id="VAR_019277" description="In dbSNP:rs5030015." evidence="30">
    <original>G</original>
    <variation>S</variation>
    <location>
        <position position="163"/>
    </location>
</feature>
<feature type="sequence variant" id="VAR_019278" description="In dbSNP:rs1656922." evidence="29 30 31">
    <original>M</original>
    <variation>T</variation>
    <location>
        <position position="178"/>
    </location>
</feature>
<feature type="sequence variant" id="VAR_028937" description="In dbSNP:rs2304456." evidence="6">
    <original>I</original>
    <variation>M</variation>
    <location>
        <position position="197"/>
    </location>
</feature>
<feature type="sequence variant" id="VAR_019279" description="In dbSNP:rs5030024." evidence="30">
    <original>L</original>
    <variation>P</variation>
    <location>
        <position position="212"/>
    </location>
</feature>
<feature type="sequence variant" id="VAR_055233" description="In T-kinin peptide." evidence="14 22">
    <location>
        <begin position="378"/>
        <end position="380"/>
    </location>
</feature>
<feature type="sequence variant" id="VAR_085817" description="In HAE6; dbSNP:rs765933558." evidence="17">
    <original>M</original>
    <variation>K</variation>
    <location>
        <position position="379"/>
    </location>
</feature>
<feature type="sequence variant" id="VAR_048853" description="In dbSNP:rs5030084.">
    <original>D</original>
    <variation>E</variation>
    <location>
        <position position="430"/>
    </location>
</feature>
<feature type="sequence variant" id="VAR_085818" description="In HAE6; uncertain significance; dbSNP:rs1369253342." evidence="19">
    <original>P</original>
    <variation>A</variation>
    <location>
        <position position="574"/>
    </location>
</feature>
<feature type="sequence variant" id="VAR_048854" description="In dbSNP:rs710446.">
    <original>I</original>
    <variation>T</variation>
    <location>
        <position position="581"/>
    </location>
</feature>
<feature type="sequence variant" id="VAR_048855" description="In dbSNP:rs5030087.">
    <original>G</original>
    <variation>A</variation>
    <location>
        <position position="642"/>
    </location>
</feature>
<feature type="sequence conflict" description="In Ref. 3; BAF83528." evidence="37" ref="3">
    <original>L</original>
    <variation>F</variation>
    <location>
        <position position="33"/>
    </location>
</feature>
<feature type="sequence conflict" description="In Ref. 3; BAF83528." evidence="37" ref="3">
    <original>V</original>
    <variation>A</variation>
    <location>
        <position position="311"/>
    </location>
</feature>
<feature type="sequence conflict" description="In Ref. 5; AAO61092 and 12; AA sequence." evidence="37" ref="5 12">
    <original>I</original>
    <variation>T</variation>
    <location>
        <position position="593"/>
    </location>
</feature>
<feature type="strand" evidence="43">
    <location>
        <begin position="385"/>
        <end position="387"/>
    </location>
</feature>
<reference key="1">
    <citation type="journal article" date="1984" name="Biochemistry">
        <title>Isolation of a human cDNA for alpha 2-thiol proteinase inhibitor and its identity with low molecular weight kininogen.</title>
        <authorList>
            <person name="Ohkubo I."/>
            <person name="Kurachi K."/>
            <person name="Takasawa T."/>
            <person name="Shiokawa H."/>
            <person name="Sasaki M."/>
        </authorList>
    </citation>
    <scope>NUCLEOTIDE SEQUENCE [MRNA] (ISOFORM LMW)</scope>
</reference>
<reference key="2">
    <citation type="journal article" date="1985" name="J. Biol. Chem.">
        <title>Cloning and sequence analysis of cDNAs for human high molecular weight and low molecular weight prekininogens. Primary structures of two human prekininogens.</title>
        <authorList>
            <person name="Takagaki Y."/>
            <person name="Kitamura N."/>
            <person name="Nakanishi S."/>
        </authorList>
    </citation>
    <scope>NUCLEOTIDE SEQUENCE [GENOMIC DNA] (ISOFORMS HMW AND LMW)</scope>
    <source>
        <tissue>Liver</tissue>
    </source>
</reference>
<reference key="3">
    <citation type="journal article" date="2004" name="Nat. Genet.">
        <title>Complete sequencing and characterization of 21,243 full-length human cDNAs.</title>
        <authorList>
            <person name="Ota T."/>
            <person name="Suzuki Y."/>
            <person name="Nishikawa T."/>
            <person name="Otsuki T."/>
            <person name="Sugiyama T."/>
            <person name="Irie R."/>
            <person name="Wakamatsu A."/>
            <person name="Hayashi K."/>
            <person name="Sato H."/>
            <person name="Nagai K."/>
            <person name="Kimura K."/>
            <person name="Makita H."/>
            <person name="Sekine M."/>
            <person name="Obayashi M."/>
            <person name="Nishi T."/>
            <person name="Shibahara T."/>
            <person name="Tanaka T."/>
            <person name="Ishii S."/>
            <person name="Yamamoto J."/>
            <person name="Saito K."/>
            <person name="Kawai Y."/>
            <person name="Isono Y."/>
            <person name="Nakamura Y."/>
            <person name="Nagahari K."/>
            <person name="Murakami K."/>
            <person name="Yasuda T."/>
            <person name="Iwayanagi T."/>
            <person name="Wagatsuma M."/>
            <person name="Shiratori A."/>
            <person name="Sudo H."/>
            <person name="Hosoiri T."/>
            <person name="Kaku Y."/>
            <person name="Kodaira H."/>
            <person name="Kondo H."/>
            <person name="Sugawara M."/>
            <person name="Takahashi M."/>
            <person name="Kanda K."/>
            <person name="Yokoi T."/>
            <person name="Furuya T."/>
            <person name="Kikkawa E."/>
            <person name="Omura Y."/>
            <person name="Abe K."/>
            <person name="Kamihara K."/>
            <person name="Katsuta N."/>
            <person name="Sato K."/>
            <person name="Tanikawa M."/>
            <person name="Yamazaki M."/>
            <person name="Ninomiya K."/>
            <person name="Ishibashi T."/>
            <person name="Yamashita H."/>
            <person name="Murakawa K."/>
            <person name="Fujimori K."/>
            <person name="Tanai H."/>
            <person name="Kimata M."/>
            <person name="Watanabe M."/>
            <person name="Hiraoka S."/>
            <person name="Chiba Y."/>
            <person name="Ishida S."/>
            <person name="Ono Y."/>
            <person name="Takiguchi S."/>
            <person name="Watanabe S."/>
            <person name="Yosida M."/>
            <person name="Hotuta T."/>
            <person name="Kusano J."/>
            <person name="Kanehori K."/>
            <person name="Takahashi-Fujii A."/>
            <person name="Hara H."/>
            <person name="Tanase T.-O."/>
            <person name="Nomura Y."/>
            <person name="Togiya S."/>
            <person name="Komai F."/>
            <person name="Hara R."/>
            <person name="Takeuchi K."/>
            <person name="Arita M."/>
            <person name="Imose N."/>
            <person name="Musashino K."/>
            <person name="Yuuki H."/>
            <person name="Oshima A."/>
            <person name="Sasaki N."/>
            <person name="Aotsuka S."/>
            <person name="Yoshikawa Y."/>
            <person name="Matsunawa H."/>
            <person name="Ichihara T."/>
            <person name="Shiohata N."/>
            <person name="Sano S."/>
            <person name="Moriya S."/>
            <person name="Momiyama H."/>
            <person name="Satoh N."/>
            <person name="Takami S."/>
            <person name="Terashima Y."/>
            <person name="Suzuki O."/>
            <person name="Nakagawa S."/>
            <person name="Senoh A."/>
            <person name="Mizoguchi H."/>
            <person name="Goto Y."/>
            <person name="Shimizu F."/>
            <person name="Wakebe H."/>
            <person name="Hishigaki H."/>
            <person name="Watanabe T."/>
            <person name="Sugiyama A."/>
            <person name="Takemoto M."/>
            <person name="Kawakami B."/>
            <person name="Yamazaki M."/>
            <person name="Watanabe K."/>
            <person name="Kumagai A."/>
            <person name="Itakura S."/>
            <person name="Fukuzumi Y."/>
            <person name="Fujimori Y."/>
            <person name="Komiyama M."/>
            <person name="Tashiro H."/>
            <person name="Tanigami A."/>
            <person name="Fujiwara T."/>
            <person name="Ono T."/>
            <person name="Yamada K."/>
            <person name="Fujii Y."/>
            <person name="Ozaki K."/>
            <person name="Hirao M."/>
            <person name="Ohmori Y."/>
            <person name="Kawabata A."/>
            <person name="Hikiji T."/>
            <person name="Kobatake N."/>
            <person name="Inagaki H."/>
            <person name="Ikema Y."/>
            <person name="Okamoto S."/>
            <person name="Okitani R."/>
            <person name="Kawakami T."/>
            <person name="Noguchi S."/>
            <person name="Itoh T."/>
            <person name="Shigeta K."/>
            <person name="Senba T."/>
            <person name="Matsumura K."/>
            <person name="Nakajima Y."/>
            <person name="Mizuno T."/>
            <person name="Morinaga M."/>
            <person name="Sasaki M."/>
            <person name="Togashi T."/>
            <person name="Oyama M."/>
            <person name="Hata H."/>
            <person name="Watanabe M."/>
            <person name="Komatsu T."/>
            <person name="Mizushima-Sugano J."/>
            <person name="Satoh T."/>
            <person name="Shirai Y."/>
            <person name="Takahashi Y."/>
            <person name="Nakagawa K."/>
            <person name="Okumura K."/>
            <person name="Nagase T."/>
            <person name="Nomura N."/>
            <person name="Kikuchi H."/>
            <person name="Masuho Y."/>
            <person name="Yamashita R."/>
            <person name="Nakai K."/>
            <person name="Yada T."/>
            <person name="Nakamura Y."/>
            <person name="Ohara O."/>
            <person name="Isogai T."/>
            <person name="Sugano S."/>
        </authorList>
    </citation>
    <scope>NUCLEOTIDE SEQUENCE [LARGE SCALE MRNA] (ISOFORM LMW)</scope>
    <source>
        <tissue>Liver</tissue>
    </source>
</reference>
<reference key="4">
    <citation type="submission" date="2005-04" db="EMBL/GenBank/DDBJ databases">
        <authorList>
            <person name="Totoki Y."/>
            <person name="Toyoda A."/>
            <person name="Takeda T."/>
            <person name="Sakaki Y."/>
            <person name="Tanaka A."/>
            <person name="Yokoyama S."/>
        </authorList>
    </citation>
    <scope>NUCLEOTIDE SEQUENCE [LARGE SCALE MRNA] (ISOFORM LMW)</scope>
    <scope>VARIANT THR-178</scope>
    <source>
        <tissue>Kidney</tissue>
    </source>
</reference>
<reference key="5">
    <citation type="submission" date="2003-03" db="EMBL/GenBank/DDBJ databases">
        <authorList>
            <consortium name="SeattleSNPs variation discovery resource"/>
        </authorList>
    </citation>
    <scope>NUCLEOTIDE SEQUENCE [GENOMIC DNA]</scope>
    <scope>VARIANTS SER-163; THR-178 AND PRO-212</scope>
</reference>
<reference key="6">
    <citation type="journal article" date="2006" name="Nature">
        <title>The DNA sequence, annotation and analysis of human chromosome 3.</title>
        <authorList>
            <person name="Muzny D.M."/>
            <person name="Scherer S.E."/>
            <person name="Kaul R."/>
            <person name="Wang J."/>
            <person name="Yu J."/>
            <person name="Sudbrak R."/>
            <person name="Buhay C.J."/>
            <person name="Chen R."/>
            <person name="Cree A."/>
            <person name="Ding Y."/>
            <person name="Dugan-Rocha S."/>
            <person name="Gill R."/>
            <person name="Gunaratne P."/>
            <person name="Harris R.A."/>
            <person name="Hawes A.C."/>
            <person name="Hernandez J."/>
            <person name="Hodgson A.V."/>
            <person name="Hume J."/>
            <person name="Jackson A."/>
            <person name="Khan Z.M."/>
            <person name="Kovar-Smith C."/>
            <person name="Lewis L.R."/>
            <person name="Lozado R.J."/>
            <person name="Metzker M.L."/>
            <person name="Milosavljevic A."/>
            <person name="Miner G.R."/>
            <person name="Morgan M.B."/>
            <person name="Nazareth L.V."/>
            <person name="Scott G."/>
            <person name="Sodergren E."/>
            <person name="Song X.-Z."/>
            <person name="Steffen D."/>
            <person name="Wei S."/>
            <person name="Wheeler D.A."/>
            <person name="Wright M.W."/>
            <person name="Worley K.C."/>
            <person name="Yuan Y."/>
            <person name="Zhang Z."/>
            <person name="Adams C.Q."/>
            <person name="Ansari-Lari M.A."/>
            <person name="Ayele M."/>
            <person name="Brown M.J."/>
            <person name="Chen G."/>
            <person name="Chen Z."/>
            <person name="Clendenning J."/>
            <person name="Clerc-Blankenburg K.P."/>
            <person name="Chen R."/>
            <person name="Chen Z."/>
            <person name="Davis C."/>
            <person name="Delgado O."/>
            <person name="Dinh H.H."/>
            <person name="Dong W."/>
            <person name="Draper H."/>
            <person name="Ernst S."/>
            <person name="Fu G."/>
            <person name="Gonzalez-Garay M.L."/>
            <person name="Garcia D.K."/>
            <person name="Gillett W."/>
            <person name="Gu J."/>
            <person name="Hao B."/>
            <person name="Haugen E."/>
            <person name="Havlak P."/>
            <person name="He X."/>
            <person name="Hennig S."/>
            <person name="Hu S."/>
            <person name="Huang W."/>
            <person name="Jackson L.R."/>
            <person name="Jacob L.S."/>
            <person name="Kelly S.H."/>
            <person name="Kube M."/>
            <person name="Levy R."/>
            <person name="Li Z."/>
            <person name="Liu B."/>
            <person name="Liu J."/>
            <person name="Liu W."/>
            <person name="Lu J."/>
            <person name="Maheshwari M."/>
            <person name="Nguyen B.-V."/>
            <person name="Okwuonu G.O."/>
            <person name="Palmeiri A."/>
            <person name="Pasternak S."/>
            <person name="Perez L.M."/>
            <person name="Phelps K.A."/>
            <person name="Plopper F.J."/>
            <person name="Qiang B."/>
            <person name="Raymond C."/>
            <person name="Rodriguez R."/>
            <person name="Saenphimmachak C."/>
            <person name="Santibanez J."/>
            <person name="Shen H."/>
            <person name="Shen Y."/>
            <person name="Subramanian S."/>
            <person name="Tabor P.E."/>
            <person name="Verduzco D."/>
            <person name="Waldron L."/>
            <person name="Wang J."/>
            <person name="Wang J."/>
            <person name="Wang Q."/>
            <person name="Williams G.A."/>
            <person name="Wong G.K.-S."/>
            <person name="Yao Z."/>
            <person name="Zhang J."/>
            <person name="Zhang X."/>
            <person name="Zhao G."/>
            <person name="Zhou J."/>
            <person name="Zhou Y."/>
            <person name="Nelson D."/>
            <person name="Lehrach H."/>
            <person name="Reinhardt R."/>
            <person name="Naylor S.L."/>
            <person name="Yang H."/>
            <person name="Olson M."/>
            <person name="Weinstock G."/>
            <person name="Gibbs R.A."/>
        </authorList>
    </citation>
    <scope>NUCLEOTIDE SEQUENCE [LARGE SCALE GENOMIC DNA]</scope>
</reference>
<reference key="7">
    <citation type="submission" date="2005-09" db="EMBL/GenBank/DDBJ databases">
        <authorList>
            <person name="Mural R.J."/>
            <person name="Istrail S."/>
            <person name="Sutton G.G."/>
            <person name="Florea L."/>
            <person name="Halpern A.L."/>
            <person name="Mobarry C.M."/>
            <person name="Lippert R."/>
            <person name="Walenz B."/>
            <person name="Shatkay H."/>
            <person name="Dew I."/>
            <person name="Miller J.R."/>
            <person name="Flanigan M.J."/>
            <person name="Edwards N.J."/>
            <person name="Bolanos R."/>
            <person name="Fasulo D."/>
            <person name="Halldorsson B.V."/>
            <person name="Hannenhalli S."/>
            <person name="Turner R."/>
            <person name="Yooseph S."/>
            <person name="Lu F."/>
            <person name="Nusskern D.R."/>
            <person name="Shue B.C."/>
            <person name="Zheng X.H."/>
            <person name="Zhong F."/>
            <person name="Delcher A.L."/>
            <person name="Huson D.H."/>
            <person name="Kravitz S.A."/>
            <person name="Mouchard L."/>
            <person name="Reinert K."/>
            <person name="Remington K.A."/>
            <person name="Clark A.G."/>
            <person name="Waterman M.S."/>
            <person name="Eichler E.E."/>
            <person name="Adams M.D."/>
            <person name="Hunkapiller M.W."/>
            <person name="Myers E.W."/>
            <person name="Venter J.C."/>
        </authorList>
    </citation>
    <scope>NUCLEOTIDE SEQUENCE [LARGE SCALE GENOMIC DNA]</scope>
    <scope>VARIANT THR-178</scope>
</reference>
<reference key="8">
    <citation type="journal article" date="2004" name="Genome Res.">
        <title>The status, quality, and expansion of the NIH full-length cDNA project: the Mammalian Gene Collection (MGC).</title>
        <authorList>
            <consortium name="The MGC Project Team"/>
        </authorList>
    </citation>
    <scope>NUCLEOTIDE SEQUENCE [LARGE SCALE MRNA] (ISOFORM LMW)</scope>
    <scope>VARIANT MET-197</scope>
    <source>
        <tissue>Kidney</tissue>
    </source>
</reference>
<reference key="9">
    <citation type="journal article" date="1986" name="Eur. J. Biochem.">
        <title>Completion of the primary structure of human high-molecular-mass kininogen. The amino acid sequence of the entire heavy chain and evidence for its evolution by gene triplication.</title>
        <authorList>
            <person name="Kellermann J."/>
            <person name="Lottspeich F."/>
            <person name="Henschen A."/>
            <person name="Muller-Esterl W."/>
        </authorList>
    </citation>
    <scope>PROTEIN SEQUENCE OF 19-380</scope>
    <scope>GLYCOSYLATION AT ASN-169 AND ASN-205</scope>
    <scope>LACK OF GLYCOSYLATION AT ASN-48</scope>
</reference>
<reference key="10">
    <citation type="journal article" date="1986" name="Biol. Chem. Hoppe-Seyler">
        <title>Human Ile-Ser-bradykinin, identical with rat T-kinin, is a major permeability factor in ovarian carcinoma ascites.</title>
        <authorList>
            <person name="Wunderer G."/>
            <person name="Walter I."/>
            <person name="Mueller E."/>
            <person name="Henschen A."/>
        </authorList>
    </citation>
    <scope>PROTEIN SEQUENCE OF 376-389 (T-KININ)</scope>
    <scope>VARIANT 378-LEU--LYS-380 DEL</scope>
    <source>
        <tissue>Ascites</tissue>
    </source>
</reference>
<reference key="11">
    <citation type="journal article" date="1990" name="Biol. Chem. Hoppe-Seyler">
        <title>Ile-Ser-bradykinin is an aberrant permeability factor in various human malignant effusions.</title>
        <authorList>
            <person name="Wunderer G."/>
            <person name="Walter I."/>
            <person name="Eschenbacher B."/>
            <person name="Lang M."/>
            <person name="Kellermann J."/>
            <person name="Kindermann G."/>
        </authorList>
    </citation>
    <scope>PROTEIN SEQUENCE OF 376-389 (T-KININ)</scope>
    <scope>TISSUE SPECIFICITY</scope>
    <scope>VARIANT 378-LEU--LYS-380 DEL</scope>
</reference>
<reference key="12">
    <citation type="journal article" date="1985" name="Eur. J. Biochem.">
        <title>The amino acid sequence of the light chain of human high-molecular-mass kininogen.</title>
        <authorList>
            <person name="Lottspeich F."/>
            <person name="Kellermann J."/>
            <person name="Henschen A."/>
            <person name="Foertsch B."/>
            <person name="Mueller-Esterl W."/>
        </authorList>
    </citation>
    <scope>PROTEIN SEQUENCE OF 379-644</scope>
</reference>
<reference key="13">
    <citation type="journal article" date="1988" name="FEBS Lett.">
        <title>Isolation and identification of hydroxyproline analogues of bradykinin in human urine.</title>
        <authorList>
            <person name="Kato H."/>
            <person name="Matsumura Y."/>
            <person name="Maeda H."/>
        </authorList>
    </citation>
    <scope>PROTEIN SEQUENCE OF 380-389 (BRADYKININ)</scope>
    <scope>HYDROXYLATION AT PRO-383</scope>
</reference>
<reference key="14">
    <citation type="journal article" date="1968" name="Fed. Proc.">
        <title>Structural features of plasma kinins and kininogens.</title>
        <authorList>
            <person name="Pierce J.V."/>
        </authorList>
    </citation>
    <scope>PROTEIN SEQUENCE OF 381-389</scope>
</reference>
<reference key="15">
    <citation type="journal article" date="1995" name="FEBS Lett.">
        <title>Purification from human plasma of a tetrapeptide that potentiates insulin-like growth factor-I activity in chick embryo cartilage.</title>
        <authorList>
            <person name="Straczek J."/>
            <person name="Maachi F."/>
            <person name="Le Nguyen D."/>
            <person name="Becchi M."/>
            <person name="Heulin M.H."/>
            <person name="Nabet P."/>
            <person name="Belleville F."/>
        </authorList>
    </citation>
    <scope>PROTEIN SEQUENCE OF 431-434</scope>
    <scope>IDENTIFICATION BY MASS SPECTROMETRY</scope>
</reference>
<reference key="16">
    <citation type="journal article" date="1967" name="Nature">
        <title>Second kininase in human blood plasma.</title>
        <authorList>
            <person name="Yang H.Y."/>
            <person name="Erdoes E.G."/>
        </authorList>
    </citation>
    <scope>FUNCTION (BRADYKININ)</scope>
    <scope>DEGRADATION (BRADYKININ)</scope>
</reference>
<reference key="17">
    <citation type="journal article" date="1970" name="Biochim. Biophys. Acta">
        <title>A dipeptidyl carboxypeptidase that converts angiotensin I and inactivates bradykinin.</title>
        <authorList>
            <person name="Yang H.Y."/>
            <person name="Erdoes E.G."/>
            <person name="Levin Y."/>
        </authorList>
    </citation>
    <scope>FUNCTION (BRADYKININ)</scope>
    <scope>DEGRADATION (BRADYKININ)</scope>
</reference>
<reference key="18">
    <citation type="journal article" date="1984" name="Seikagaku">
        <title>Disulfide bonds in bovine HMW kininogens.</title>
        <authorList>
            <person name="Sueyoshi T."/>
            <person name="Miyata T."/>
            <person name="Kato H."/>
            <person name="Iwanaga S."/>
        </authorList>
    </citation>
    <scope>DISULFIDE BONDS</scope>
</reference>
<reference key="19">
    <citation type="journal article" date="1985" name="J. Biol. Chem.">
        <title>Structural organization of the human kininogen gene and a model for its evolution.</title>
        <authorList>
            <person name="Kitamura N."/>
            <person name="Kitagawa H."/>
            <person name="Fukushima D."/>
            <person name="Takagaki Y."/>
            <person name="Miyata T."/>
            <person name="Nakanishi S."/>
        </authorList>
    </citation>
    <scope>GENE STRUCTURE</scope>
</reference>
<reference key="20">
    <citation type="journal article" date="1988" name="J. Biol. Chem.">
        <title>Purification and identification of [hydroxyprolyl3]bradykinin in ascitic fluid from a patient with gastric cancer.</title>
        <authorList>
            <person name="Maeda H."/>
            <person name="Matsumura Y."/>
            <person name="Kato H."/>
        </authorList>
    </citation>
    <scope>AMINO-ACID COMPOSITION OF 381-389</scope>
    <scope>HYDROXYLATION AT PRO-383</scope>
</reference>
<reference key="21">
    <citation type="journal article" date="1996" name="J. Exp. Med.">
        <title>Streptococcal cysteine proteinase releases kinins: a virulence mechanism.</title>
        <authorList>
            <person name="Herwald H."/>
            <person name="Collin M."/>
            <person name="Mueller-Esterl W."/>
            <person name="Bjoerck L."/>
        </authorList>
    </citation>
    <scope>PROTEOLYTIC CLEAVAGE (MICROBIAL INFECTION)</scope>
</reference>
<reference key="22">
    <citation type="journal article" date="2003" name="Nat. Biotechnol.">
        <title>Identification and quantification of N-linked glycoproteins using hydrazide chemistry, stable isotope labeling and mass spectrometry.</title>
        <authorList>
            <person name="Zhang H."/>
            <person name="Li X.-J."/>
            <person name="Martin D.B."/>
            <person name="Aebersold R."/>
        </authorList>
    </citation>
    <scope>GLYCOSYLATION AT ASN-294</scope>
</reference>
<reference key="23">
    <citation type="journal article" date="2004" name="Proteomics">
        <title>Screening for N-glycosylated proteins by liquid chromatography mass spectrometry.</title>
        <authorList>
            <person name="Bunkenborg J."/>
            <person name="Pilch B.J."/>
            <person name="Podtelejnikov A.V."/>
            <person name="Wisniewski J.R."/>
        </authorList>
    </citation>
    <scope>GLYCOSYLATION [LARGE SCALE ANALYSIS] AT ASN-169 AND ASN-294</scope>
    <source>
        <tissue>Plasma</tissue>
    </source>
</reference>
<reference key="24">
    <citation type="journal article" date="2005" name="J. Biochem.">
        <title>Contribution of the N-terminal and C-terminal domains of haemaphysalin to inhibition of activation of plasma kallikrein-kinin system.</title>
        <authorList>
            <person name="Kato N."/>
            <person name="Okayama T."/>
            <person name="Isawa H."/>
            <person name="Yuda M."/>
            <person name="Chinzei Y."/>
            <person name="Iwanaga S."/>
        </authorList>
    </citation>
    <scope>INTERACTION WITH TICK HAEMAPHYSALIN</scope>
</reference>
<reference key="25">
    <citation type="journal article" date="2005" name="J. Proteome Res.">
        <title>Human plasma N-glycoproteome analysis by immunoaffinity subtraction, hydrazide chemistry, and mass spectrometry.</title>
        <authorList>
            <person name="Liu T."/>
            <person name="Qian W.-J."/>
            <person name="Gritsenko M.A."/>
            <person name="Camp D.G. II"/>
            <person name="Monroe M.E."/>
            <person name="Moore R.J."/>
            <person name="Smith R.D."/>
        </authorList>
    </citation>
    <scope>GLYCOSYLATION [LARGE SCALE ANALYSIS] AT ASN-48; ASN-169; ASN-205 AND ASN-294</scope>
    <source>
        <tissue>Plasma</tissue>
    </source>
</reference>
<reference key="26">
    <citation type="journal article" date="2005" name="Thromb. Haemost.">
        <title>Identification and characterization of the plasma kallikrein-kinin system inhibitor, haemaphysalin, from hard tick, Haemaphysalis longicornis.</title>
        <authorList>
            <person name="Kato N."/>
            <person name="Iwanaga S."/>
            <person name="Okayama T."/>
            <person name="Isawa H."/>
            <person name="Yuda M."/>
            <person name="Chinzei Y."/>
        </authorList>
    </citation>
    <scope>INTERACTION WITH TICK HAEMAPHYSALIN</scope>
</reference>
<reference key="27">
    <citation type="journal article" date="2007" name="FEBS J.">
        <title>Identification and characterization of plasma kallikrein-kinin system inhibitors from salivary glands of the blood-sucking insect Triatoma infestans.</title>
        <authorList>
            <person name="Isawa H."/>
            <person name="Orito Y."/>
            <person name="Jingushi N."/>
            <person name="Iwanaga S."/>
            <person name="Morita A."/>
            <person name="Chinzei Y."/>
            <person name="Yuda M."/>
        </authorList>
    </citation>
    <scope>INTERACTION WITH MOSQUITO SHORT FORM SALIVARY PROTEIN D7R1; ASSASSIN BUG TRIAFESTIN-1 AND ASSASSIN BUG TRIAFESTIN-2</scope>
</reference>
<reference key="28">
    <citation type="journal article" date="2009" name="J. Proteome Res.">
        <title>An initial characterization of the serum phosphoproteome.</title>
        <authorList>
            <person name="Zhou W."/>
            <person name="Ross M.M."/>
            <person name="Tessitore A."/>
            <person name="Ornstein D."/>
            <person name="Vanmeter A."/>
            <person name="Liotta L.A."/>
            <person name="Petricoin E.F. III"/>
        </authorList>
    </citation>
    <scope>PHOSPHORYLATION [LARGE SCALE ANALYSIS] AT SER-332</scope>
    <scope>IDENTIFICATION BY MASS SPECTROMETRY [LARGE SCALE ANALYSIS]</scope>
    <source>
        <tissue>Serum</tissue>
    </source>
</reference>
<reference key="29">
    <citation type="journal article" date="2009" name="J. Proteome Res.">
        <title>Glycoproteomics analysis of human liver tissue by combination of multiple enzyme digestion and hydrazide chemistry.</title>
        <authorList>
            <person name="Chen R."/>
            <person name="Jiang X."/>
            <person name="Sun D."/>
            <person name="Han G."/>
            <person name="Wang F."/>
            <person name="Ye M."/>
            <person name="Wang L."/>
            <person name="Zou H."/>
        </authorList>
    </citation>
    <scope>GLYCOSYLATION [LARGE SCALE ANALYSIS] AT ASN-169; ASN-205 AND ASN-294</scope>
    <source>
        <tissue>Liver</tissue>
    </source>
</reference>
<reference key="30">
    <citation type="journal article" date="2009" name="Mol. Cell. Proteomics">
        <title>A strategy for precise and large scale identification of core fucosylated glycoproteins.</title>
        <authorList>
            <person name="Jia W."/>
            <person name="Lu Z."/>
            <person name="Fu Y."/>
            <person name="Wang H.P."/>
            <person name="Wang L.H."/>
            <person name="Chi H."/>
            <person name="Yuan Z.F."/>
            <person name="Zheng Z.B."/>
            <person name="Song L.N."/>
            <person name="Han H.H."/>
            <person name="Liang Y.M."/>
            <person name="Wang J.L."/>
            <person name="Cai Y."/>
            <person name="Zhang Y.K."/>
            <person name="Deng Y.L."/>
            <person name="Ying W.T."/>
            <person name="He S.M."/>
            <person name="Qian X.H."/>
        </authorList>
    </citation>
    <scope>GLYCOSYLATION AT ASN-48; ASN-205 AND ASN-294</scope>
</reference>
<reference key="31">
    <citation type="journal article" date="2009" name="Nat. Methods">
        <title>Enrichment of glycopeptides for glycan structure and attachment site identification.</title>
        <authorList>
            <person name="Nilsson J."/>
            <person name="Rueetschi U."/>
            <person name="Halim A."/>
            <person name="Hesse C."/>
            <person name="Carlsohn E."/>
            <person name="Brinkmalm G."/>
            <person name="Larson G."/>
        </authorList>
    </citation>
    <scope>GLYCOSYLATION [LARGE SCALE ANALYSIS] AT ASN-294</scope>
    <scope>STRUCTURE OF CARBOHYDRATES</scope>
    <source>
        <tissue>Cerebrospinal fluid</tissue>
    </source>
</reference>
<reference key="32">
    <citation type="journal article" date="2014" name="J. Proteomics">
        <title>An enzyme assisted RP-RPLC approach for in-depth analysis of human liver phosphoproteome.</title>
        <authorList>
            <person name="Bian Y."/>
            <person name="Song C."/>
            <person name="Cheng K."/>
            <person name="Dong M."/>
            <person name="Wang F."/>
            <person name="Huang J."/>
            <person name="Sun D."/>
            <person name="Wang L."/>
            <person name="Ye M."/>
            <person name="Zou H."/>
        </authorList>
    </citation>
    <scope>PHOSPHORYLATION [LARGE SCALE ANALYSIS] AT SER-332</scope>
    <scope>IDENTIFICATION BY MASS SPECTROMETRY [LARGE SCALE ANALYSIS]</scope>
    <source>
        <tissue>Liver</tissue>
    </source>
</reference>
<reference key="33">
    <citation type="journal article" date="2015" name="Cell">
        <title>A single kinase generates the majority of the secreted phosphoproteome.</title>
        <authorList>
            <person name="Tagliabracci V.S."/>
            <person name="Wiley S.E."/>
            <person name="Guo X."/>
            <person name="Kinch L.N."/>
            <person name="Durrant E."/>
            <person name="Wen J."/>
            <person name="Xiao J."/>
            <person name="Cui J."/>
            <person name="Nguyen K.B."/>
            <person name="Engel J.L."/>
            <person name="Coon J.J."/>
            <person name="Grishin N."/>
            <person name="Pinna L.A."/>
            <person name="Pagliarini D.J."/>
            <person name="Dixon J.E."/>
        </authorList>
    </citation>
    <scope>PHOSPHORYLATION AT SER-332</scope>
</reference>
<reference key="34">
    <citation type="journal article" date="2019" name="Allergy">
        <title>Hereditary angioedema cosegregating with a novel kininogen 1 gene mutation changing the N-terminal cleavage site of bradykinin.</title>
        <authorList>
            <person name="Bork K."/>
            <person name="Wulff K."/>
            <person name="Rossmann H."/>
            <person name="Steinmueller-Magin L."/>
            <person name="Braenne I."/>
            <person name="Witzke G."/>
            <person name="Hardt J."/>
        </authorList>
    </citation>
    <scope>VARIANT HAE6 LYS-379</scope>
    <scope>INVOLVEMENT IN HAE6</scope>
</reference>
<reference key="35">
    <citation type="journal article" date="2020" name="J. Clin. Med.">
        <title>Deciphering the genetics of primary angioedema with normal levels of C1 inhibitor.</title>
        <authorList>
            <person name="Loules G."/>
            <person name="Parsopoulou F."/>
            <person name="Zamanakou M."/>
            <person name="Csuka D."/>
            <person name="Bova M."/>
            <person name="Gonzalez-Quevedo T."/>
            <person name="Psarros F."/>
            <person name="Porebski G."/>
            <person name="Speletas M."/>
            <person name="Firinu D."/>
            <person name="Del Giacco S."/>
            <person name="Suffritti C."/>
            <person name="Makris M."/>
            <person name="Vatsiou S."/>
            <person name="Zanichelli A."/>
            <person name="Farkas H."/>
            <person name="Germenis A.E."/>
        </authorList>
    </citation>
    <scope>VARIANT HAE6 ALA-574</scope>
    <scope>INVOLVEMENT IN HAE6</scope>
</reference>
<protein>
    <recommendedName>
        <fullName>Kininogen-1</fullName>
    </recommendedName>
    <alternativeName>
        <fullName>Alpha-2-thiol proteinase inhibitor</fullName>
    </alternativeName>
    <alternativeName>
        <fullName>Fitzgerald factor</fullName>
    </alternativeName>
    <alternativeName>
        <fullName>High molecular weight kininogen</fullName>
        <shortName>HMWK</shortName>
    </alternativeName>
    <alternativeName>
        <fullName>Williams-Fitzgerald-Flaujeac factor</fullName>
    </alternativeName>
    <component>
        <recommendedName>
            <fullName>Kininogen-1 heavy chain</fullName>
        </recommendedName>
    </component>
    <component>
        <recommendedName>
            <fullName>T-kinin</fullName>
        </recommendedName>
        <alternativeName>
            <fullName>Ile-Ser-Bradykinin</fullName>
        </alternativeName>
    </component>
    <component>
        <recommendedName>
            <fullName evidence="34">Bradykinin</fullName>
        </recommendedName>
        <alternativeName>
            <fullName>Kallidin I</fullName>
        </alternativeName>
    </component>
    <component>
        <recommendedName>
            <fullName>Lysyl-bradykinin</fullName>
        </recommendedName>
        <alternativeName>
            <fullName>Kallidin II</fullName>
        </alternativeName>
    </component>
    <component>
        <recommendedName>
            <fullName>Kininogen-1 light chain</fullName>
        </recommendedName>
    </component>
    <component>
        <recommendedName>
            <fullName>Low molecular weight growth-promoting factor</fullName>
        </recommendedName>
    </component>
</protein>
<proteinExistence type="evidence at protein level"/>
<accession>P01042</accession>
<accession>A8K474</accession>
<accession>B2RCR2</accession>
<accession>C9JEX1</accession>
<accession>P01043</accession>
<accession>Q53EQ0</accession>
<accession>Q6PAU9</accession>
<accession>Q7M4P1</accession>
<evidence type="ECO:0000250" key="1">
    <source>
        <dbReference type="UniProtKB" id="P01045"/>
    </source>
</evidence>
<evidence type="ECO:0000255" key="2">
    <source>
        <dbReference type="PROSITE-ProRule" id="PRU00979"/>
    </source>
</evidence>
<evidence type="ECO:0000256" key="3">
    <source>
        <dbReference type="SAM" id="MobiDB-lite"/>
    </source>
</evidence>
<evidence type="ECO:0000269" key="4">
    <source>
    </source>
</evidence>
<evidence type="ECO:0000269" key="5">
    <source>
    </source>
</evidence>
<evidence type="ECO:0000269" key="6">
    <source>
    </source>
</evidence>
<evidence type="ECO:0000269" key="7">
    <source>
    </source>
</evidence>
<evidence type="ECO:0000269" key="8">
    <source>
    </source>
</evidence>
<evidence type="ECO:0000269" key="9">
    <source>
    </source>
</evidence>
<evidence type="ECO:0000269" key="10">
    <source>
    </source>
</evidence>
<evidence type="ECO:0000269" key="11">
    <source>
    </source>
</evidence>
<evidence type="ECO:0000269" key="12">
    <source>
    </source>
</evidence>
<evidence type="ECO:0000269" key="13">
    <source>
    </source>
</evidence>
<evidence type="ECO:0000269" key="14">
    <source>
    </source>
</evidence>
<evidence type="ECO:0000269" key="15">
    <source>
    </source>
</evidence>
<evidence type="ECO:0000269" key="16">
    <source>
    </source>
</evidence>
<evidence type="ECO:0000269" key="17">
    <source>
    </source>
</evidence>
<evidence type="ECO:0000269" key="18">
    <source>
    </source>
</evidence>
<evidence type="ECO:0000269" key="19">
    <source>
    </source>
</evidence>
<evidence type="ECO:0000269" key="20">
    <source>
    </source>
</evidence>
<evidence type="ECO:0000269" key="21">
    <source>
    </source>
</evidence>
<evidence type="ECO:0000269" key="22">
    <source>
    </source>
</evidence>
<evidence type="ECO:0000269" key="23">
    <source>
    </source>
</evidence>
<evidence type="ECO:0000269" key="24">
    <source>
    </source>
</evidence>
<evidence type="ECO:0000269" key="25">
    <source>
    </source>
</evidence>
<evidence type="ECO:0000269" key="26">
    <source>
    </source>
</evidence>
<evidence type="ECO:0000269" key="27">
    <source>
    </source>
</evidence>
<evidence type="ECO:0000269" key="28">
    <source ref="18"/>
</evidence>
<evidence type="ECO:0000269" key="29">
    <source ref="4"/>
</evidence>
<evidence type="ECO:0000269" key="30">
    <source ref="5"/>
</evidence>
<evidence type="ECO:0000269" key="31">
    <source ref="7"/>
</evidence>
<evidence type="ECO:0000303" key="32">
    <source>
    </source>
</evidence>
<evidence type="ECO:0000303" key="33">
    <source>
    </source>
</evidence>
<evidence type="ECO:0000303" key="34">
    <source>
    </source>
</evidence>
<evidence type="ECO:0000303" key="35">
    <source>
    </source>
</evidence>
<evidence type="ECO:0000303" key="36">
    <source ref="4"/>
</evidence>
<evidence type="ECO:0000305" key="37"/>
<evidence type="ECO:0000305" key="38">
    <source>
    </source>
</evidence>
<evidence type="ECO:0000305" key="39">
    <source>
    </source>
</evidence>
<evidence type="ECO:0000305" key="40">
    <source>
    </source>
</evidence>
<evidence type="ECO:0007744" key="41">
    <source>
    </source>
</evidence>
<evidence type="ECO:0007744" key="42">
    <source>
    </source>
</evidence>
<evidence type="ECO:0007829" key="43">
    <source>
        <dbReference type="PDB" id="7F6I"/>
    </source>
</evidence>
<name>KNG1_HUMAN</name>
<keyword id="KW-0002">3D-structure</keyword>
<keyword id="KW-0025">Alternative splicing</keyword>
<keyword id="KW-0094">Blood coagulation</keyword>
<keyword id="KW-0903">Direct protein sequencing</keyword>
<keyword id="KW-0225">Disease variant</keyword>
<keyword id="KW-1015">Disulfide bond</keyword>
<keyword id="KW-0325">Glycoprotein</keyword>
<keyword id="KW-0356">Hemostasis</keyword>
<keyword id="KW-0379">Hydroxylation</keyword>
<keyword id="KW-0395">Inflammatory response</keyword>
<keyword id="KW-0597">Phosphoprotein</keyword>
<keyword id="KW-0646">Protease inhibitor</keyword>
<keyword id="KW-1267">Proteomics identification</keyword>
<keyword id="KW-0873">Pyrrolidone carboxylic acid</keyword>
<keyword id="KW-1185">Reference proteome</keyword>
<keyword id="KW-0677">Repeat</keyword>
<keyword id="KW-0964">Secreted</keyword>
<keyword id="KW-0732">Signal</keyword>
<keyword id="KW-0789">Thiol protease inhibitor</keyword>
<keyword id="KW-0838">Vasoactive</keyword>
<keyword id="KW-0840">Vasodilator</keyword>